<comment type="subunit">
    <text evidence="1">Part of the 50S ribosomal subunit.</text>
</comment>
<comment type="similarity">
    <text evidence="1">Belongs to the bacterial ribosomal protein bL31 family. Type B subfamily.</text>
</comment>
<organism>
    <name type="scientific">Oenococcus oeni (strain ATCC BAA-331 / PSU-1)</name>
    <dbReference type="NCBI Taxonomy" id="203123"/>
    <lineage>
        <taxon>Bacteria</taxon>
        <taxon>Bacillati</taxon>
        <taxon>Bacillota</taxon>
        <taxon>Bacilli</taxon>
        <taxon>Lactobacillales</taxon>
        <taxon>Lactobacillaceae</taxon>
        <taxon>Oenococcus</taxon>
    </lineage>
</organism>
<keyword id="KW-1185">Reference proteome</keyword>
<keyword id="KW-0687">Ribonucleoprotein</keyword>
<keyword id="KW-0689">Ribosomal protein</keyword>
<name>RL31B_OENOB</name>
<reference key="1">
    <citation type="journal article" date="2006" name="Proc. Natl. Acad. Sci. U.S.A.">
        <title>Comparative genomics of the lactic acid bacteria.</title>
        <authorList>
            <person name="Makarova K.S."/>
            <person name="Slesarev A."/>
            <person name="Wolf Y.I."/>
            <person name="Sorokin A."/>
            <person name="Mirkin B."/>
            <person name="Koonin E.V."/>
            <person name="Pavlov A."/>
            <person name="Pavlova N."/>
            <person name="Karamychev V."/>
            <person name="Polouchine N."/>
            <person name="Shakhova V."/>
            <person name="Grigoriev I."/>
            <person name="Lou Y."/>
            <person name="Rohksar D."/>
            <person name="Lucas S."/>
            <person name="Huang K."/>
            <person name="Goodstein D.M."/>
            <person name="Hawkins T."/>
            <person name="Plengvidhya V."/>
            <person name="Welker D."/>
            <person name="Hughes J."/>
            <person name="Goh Y."/>
            <person name="Benson A."/>
            <person name="Baldwin K."/>
            <person name="Lee J.-H."/>
            <person name="Diaz-Muniz I."/>
            <person name="Dosti B."/>
            <person name="Smeianov V."/>
            <person name="Wechter W."/>
            <person name="Barabote R."/>
            <person name="Lorca G."/>
            <person name="Altermann E."/>
            <person name="Barrangou R."/>
            <person name="Ganesan B."/>
            <person name="Xie Y."/>
            <person name="Rawsthorne H."/>
            <person name="Tamir D."/>
            <person name="Parker C."/>
            <person name="Breidt F."/>
            <person name="Broadbent J.R."/>
            <person name="Hutkins R."/>
            <person name="O'Sullivan D."/>
            <person name="Steele J."/>
            <person name="Unlu G."/>
            <person name="Saier M.H. Jr."/>
            <person name="Klaenhammer T."/>
            <person name="Richardson P."/>
            <person name="Kozyavkin S."/>
            <person name="Weimer B.C."/>
            <person name="Mills D.A."/>
        </authorList>
    </citation>
    <scope>NUCLEOTIDE SEQUENCE [LARGE SCALE GENOMIC DNA]</scope>
    <source>
        <strain>ATCC BAA-331 / PSU-1</strain>
    </source>
</reference>
<gene>
    <name evidence="1" type="primary">rpmE2</name>
    <name type="ordered locus">OEOE_1784</name>
</gene>
<proteinExistence type="inferred from homology"/>
<accession>Q04D49</accession>
<dbReference type="EMBL" id="CP000411">
    <property type="protein sequence ID" value="ABJ57623.1"/>
    <property type="molecule type" value="Genomic_DNA"/>
</dbReference>
<dbReference type="RefSeq" id="WP_002819655.1">
    <property type="nucleotide sequence ID" value="NC_008528.1"/>
</dbReference>
<dbReference type="SMR" id="Q04D49"/>
<dbReference type="STRING" id="203123.OEOE_1784"/>
<dbReference type="KEGG" id="ooe:OEOE_1784"/>
<dbReference type="eggNOG" id="COG0254">
    <property type="taxonomic scope" value="Bacteria"/>
</dbReference>
<dbReference type="HOGENOM" id="CLU_114306_2_2_9"/>
<dbReference type="Proteomes" id="UP000000774">
    <property type="component" value="Chromosome"/>
</dbReference>
<dbReference type="GO" id="GO:1990904">
    <property type="term" value="C:ribonucleoprotein complex"/>
    <property type="evidence" value="ECO:0007669"/>
    <property type="project" value="UniProtKB-KW"/>
</dbReference>
<dbReference type="GO" id="GO:0005840">
    <property type="term" value="C:ribosome"/>
    <property type="evidence" value="ECO:0007669"/>
    <property type="project" value="UniProtKB-KW"/>
</dbReference>
<dbReference type="GO" id="GO:0003735">
    <property type="term" value="F:structural constituent of ribosome"/>
    <property type="evidence" value="ECO:0007669"/>
    <property type="project" value="InterPro"/>
</dbReference>
<dbReference type="GO" id="GO:0006412">
    <property type="term" value="P:translation"/>
    <property type="evidence" value="ECO:0007669"/>
    <property type="project" value="UniProtKB-UniRule"/>
</dbReference>
<dbReference type="Gene3D" id="4.10.830.30">
    <property type="entry name" value="Ribosomal protein L31"/>
    <property type="match status" value="1"/>
</dbReference>
<dbReference type="HAMAP" id="MF_00502">
    <property type="entry name" value="Ribosomal_bL31_2"/>
    <property type="match status" value="1"/>
</dbReference>
<dbReference type="InterPro" id="IPR034704">
    <property type="entry name" value="Ribosomal_bL28/bL31-like_sf"/>
</dbReference>
<dbReference type="InterPro" id="IPR002150">
    <property type="entry name" value="Ribosomal_bL31"/>
</dbReference>
<dbReference type="InterPro" id="IPR027493">
    <property type="entry name" value="Ribosomal_bL31_B"/>
</dbReference>
<dbReference type="InterPro" id="IPR042105">
    <property type="entry name" value="Ribosomal_bL31_sf"/>
</dbReference>
<dbReference type="NCBIfam" id="TIGR00105">
    <property type="entry name" value="L31"/>
    <property type="match status" value="1"/>
</dbReference>
<dbReference type="NCBIfam" id="NF002462">
    <property type="entry name" value="PRK01678.1"/>
    <property type="match status" value="1"/>
</dbReference>
<dbReference type="PANTHER" id="PTHR33280">
    <property type="entry name" value="50S RIBOSOMAL PROTEIN L31, CHLOROPLASTIC"/>
    <property type="match status" value="1"/>
</dbReference>
<dbReference type="PANTHER" id="PTHR33280:SF1">
    <property type="entry name" value="LARGE RIBOSOMAL SUBUNIT PROTEIN BL31C"/>
    <property type="match status" value="1"/>
</dbReference>
<dbReference type="Pfam" id="PF01197">
    <property type="entry name" value="Ribosomal_L31"/>
    <property type="match status" value="1"/>
</dbReference>
<dbReference type="PRINTS" id="PR01249">
    <property type="entry name" value="RIBOSOMALL31"/>
</dbReference>
<dbReference type="SUPFAM" id="SSF143800">
    <property type="entry name" value="L28p-like"/>
    <property type="match status" value="1"/>
</dbReference>
<sequence length="80" mass="8892">MKADIHPDYRQVVFVDSTTGAKFLSGSTAKAQGEVEYEGQTYPMVRVEVTSDSHPFYTGKQKINQADGAVDKFNKKYGLN</sequence>
<protein>
    <recommendedName>
        <fullName evidence="1">Large ribosomal subunit protein bL31B</fullName>
    </recommendedName>
    <alternativeName>
        <fullName evidence="2">50S ribosomal protein L31 type B</fullName>
    </alternativeName>
</protein>
<feature type="chain" id="PRO_1000014707" description="Large ribosomal subunit protein bL31B">
    <location>
        <begin position="1"/>
        <end position="80"/>
    </location>
</feature>
<evidence type="ECO:0000255" key="1">
    <source>
        <dbReference type="HAMAP-Rule" id="MF_00502"/>
    </source>
</evidence>
<evidence type="ECO:0000305" key="2"/>